<name>HPR2_ARATH</name>
<dbReference type="EC" id="1.1.1.79"/>
<dbReference type="EC" id="1.1.1.81"/>
<dbReference type="EMBL" id="AC011717">
    <property type="protein sequence ID" value="AAG52259.1"/>
    <property type="molecule type" value="Genomic_DNA"/>
</dbReference>
<dbReference type="EMBL" id="CP002684">
    <property type="protein sequence ID" value="AEE36315.1"/>
    <property type="molecule type" value="Genomic_DNA"/>
</dbReference>
<dbReference type="EMBL" id="CP002684">
    <property type="protein sequence ID" value="AEE36316.1"/>
    <property type="molecule type" value="Genomic_DNA"/>
</dbReference>
<dbReference type="EMBL" id="AY069901">
    <property type="protein sequence ID" value="AAL47452.1"/>
    <property type="molecule type" value="mRNA"/>
</dbReference>
<dbReference type="EMBL" id="AY113022">
    <property type="protein sequence ID" value="AAM47330.1"/>
    <property type="molecule type" value="mRNA"/>
</dbReference>
<dbReference type="EMBL" id="AY088166">
    <property type="protein sequence ID" value="AAM65710.1"/>
    <property type="molecule type" value="mRNA"/>
</dbReference>
<dbReference type="PIR" id="G96829">
    <property type="entry name" value="G96829"/>
</dbReference>
<dbReference type="RefSeq" id="NP_001185444.1">
    <molecule id="Q9CA90-2"/>
    <property type="nucleotide sequence ID" value="NM_001198515.1"/>
</dbReference>
<dbReference type="RefSeq" id="NP_178105.1">
    <molecule id="Q9CA90-1"/>
    <property type="nucleotide sequence ID" value="NM_106636.3"/>
</dbReference>
<dbReference type="SMR" id="Q9CA90"/>
<dbReference type="BioGRID" id="29544">
    <property type="interactions" value="6"/>
</dbReference>
<dbReference type="FunCoup" id="Q9CA90">
    <property type="interactions" value="2548"/>
</dbReference>
<dbReference type="STRING" id="3702.Q9CA90"/>
<dbReference type="iPTMnet" id="Q9CA90"/>
<dbReference type="PaxDb" id="3702-AT1G79870.1"/>
<dbReference type="ProteomicsDB" id="232173">
    <molecule id="Q9CA90-1"/>
</dbReference>
<dbReference type="EnsemblPlants" id="AT1G79870.1">
    <molecule id="Q9CA90-1"/>
    <property type="protein sequence ID" value="AT1G79870.1"/>
    <property type="gene ID" value="AT1G79870"/>
</dbReference>
<dbReference type="EnsemblPlants" id="AT1G79870.2">
    <molecule id="Q9CA90-2"/>
    <property type="protein sequence ID" value="AT1G79870.2"/>
    <property type="gene ID" value="AT1G79870"/>
</dbReference>
<dbReference type="GeneID" id="844326"/>
<dbReference type="Gramene" id="AT1G79870.1">
    <molecule id="Q9CA90-1"/>
    <property type="protein sequence ID" value="AT1G79870.1"/>
    <property type="gene ID" value="AT1G79870"/>
</dbReference>
<dbReference type="Gramene" id="AT1G79870.2">
    <molecule id="Q9CA90-2"/>
    <property type="protein sequence ID" value="AT1G79870.2"/>
    <property type="gene ID" value="AT1G79870"/>
</dbReference>
<dbReference type="KEGG" id="ath:AT1G79870"/>
<dbReference type="Araport" id="AT1G79870"/>
<dbReference type="TAIR" id="AT1G79870">
    <property type="gene designation" value="HPPR2"/>
</dbReference>
<dbReference type="eggNOG" id="KOG0069">
    <property type="taxonomic scope" value="Eukaryota"/>
</dbReference>
<dbReference type="HOGENOM" id="CLU_019796_1_2_1"/>
<dbReference type="InParanoid" id="Q9CA90"/>
<dbReference type="OMA" id="PHIAWAY"/>
<dbReference type="OrthoDB" id="298012at2759"/>
<dbReference type="PhylomeDB" id="Q9CA90"/>
<dbReference type="BioCyc" id="ARA:AT1G79870-MONOMER"/>
<dbReference type="BioCyc" id="MetaCyc:AT1G79870-MONOMER"/>
<dbReference type="BRENDA" id="1.1.1.237">
    <property type="organism ID" value="399"/>
</dbReference>
<dbReference type="BRENDA" id="1.1.1.79">
    <property type="organism ID" value="399"/>
</dbReference>
<dbReference type="BRENDA" id="1.1.1.81">
    <property type="organism ID" value="399"/>
</dbReference>
<dbReference type="PRO" id="PR:Q9CA90"/>
<dbReference type="Proteomes" id="UP000006548">
    <property type="component" value="Chromosome 1"/>
</dbReference>
<dbReference type="ExpressionAtlas" id="Q9CA90">
    <property type="expression patterns" value="baseline and differential"/>
</dbReference>
<dbReference type="GO" id="GO:0005737">
    <property type="term" value="C:cytoplasm"/>
    <property type="evidence" value="ECO:0000314"/>
    <property type="project" value="UniProtKB"/>
</dbReference>
<dbReference type="GO" id="GO:0005739">
    <property type="term" value="C:mitochondrion"/>
    <property type="evidence" value="ECO:0007005"/>
    <property type="project" value="TAIR"/>
</dbReference>
<dbReference type="GO" id="GO:0030267">
    <property type="term" value="F:glyoxylate reductase (NADPH) activity"/>
    <property type="evidence" value="ECO:0000314"/>
    <property type="project" value="UniProtKB"/>
</dbReference>
<dbReference type="GO" id="GO:0047995">
    <property type="term" value="F:hydroxyphenylpyruvate reductase activity"/>
    <property type="evidence" value="ECO:0000314"/>
    <property type="project" value="TAIR"/>
</dbReference>
<dbReference type="GO" id="GO:0008465">
    <property type="term" value="F:hydroxypyruvate reductase (NADH) activity"/>
    <property type="evidence" value="ECO:0007669"/>
    <property type="project" value="RHEA"/>
</dbReference>
<dbReference type="GO" id="GO:0120509">
    <property type="term" value="F:hydroxypyruvate reductase (NADPH) activity"/>
    <property type="evidence" value="ECO:0007669"/>
    <property type="project" value="RHEA"/>
</dbReference>
<dbReference type="GO" id="GO:0016618">
    <property type="term" value="F:hydroxypyruvate reductase [NAD(P)H] activity"/>
    <property type="evidence" value="ECO:0000314"/>
    <property type="project" value="UniProtKB"/>
</dbReference>
<dbReference type="GO" id="GO:0051287">
    <property type="term" value="F:NAD binding"/>
    <property type="evidence" value="ECO:0007669"/>
    <property type="project" value="InterPro"/>
</dbReference>
<dbReference type="GO" id="GO:1901149">
    <property type="term" value="F:salicylic acid binding"/>
    <property type="evidence" value="ECO:0007005"/>
    <property type="project" value="TAIR"/>
</dbReference>
<dbReference type="GO" id="GO:0009854">
    <property type="term" value="P:oxidative photosynthetic carbon pathway"/>
    <property type="evidence" value="ECO:0000315"/>
    <property type="project" value="UniProtKB"/>
</dbReference>
<dbReference type="CDD" id="cd12156">
    <property type="entry name" value="HPPR"/>
    <property type="match status" value="1"/>
</dbReference>
<dbReference type="FunFam" id="3.40.50.720:FF:000213">
    <property type="entry name" value="Putative 2-hydroxyacid dehydrogenase"/>
    <property type="match status" value="1"/>
</dbReference>
<dbReference type="Gene3D" id="3.40.50.720">
    <property type="entry name" value="NAD(P)-binding Rossmann-like Domain"/>
    <property type="match status" value="2"/>
</dbReference>
<dbReference type="InterPro" id="IPR050223">
    <property type="entry name" value="D-isomer_2-hydroxyacid_DH"/>
</dbReference>
<dbReference type="InterPro" id="IPR006139">
    <property type="entry name" value="D-isomer_2_OHA_DH_cat_dom"/>
</dbReference>
<dbReference type="InterPro" id="IPR029752">
    <property type="entry name" value="D-isomer_DH_CS1"/>
</dbReference>
<dbReference type="InterPro" id="IPR006140">
    <property type="entry name" value="D-isomer_DH_NAD-bd"/>
</dbReference>
<dbReference type="InterPro" id="IPR036291">
    <property type="entry name" value="NAD(P)-bd_dom_sf"/>
</dbReference>
<dbReference type="PANTHER" id="PTHR10996:SF178">
    <property type="entry name" value="2-HYDROXYACID DEHYDROGENASE YGL185C-RELATED"/>
    <property type="match status" value="1"/>
</dbReference>
<dbReference type="PANTHER" id="PTHR10996">
    <property type="entry name" value="2-HYDROXYACID DEHYDROGENASE-RELATED"/>
    <property type="match status" value="1"/>
</dbReference>
<dbReference type="Pfam" id="PF00389">
    <property type="entry name" value="2-Hacid_dh"/>
    <property type="match status" value="1"/>
</dbReference>
<dbReference type="Pfam" id="PF02826">
    <property type="entry name" value="2-Hacid_dh_C"/>
    <property type="match status" value="1"/>
</dbReference>
<dbReference type="SUPFAM" id="SSF52283">
    <property type="entry name" value="Formate/glycerate dehydrogenase catalytic domain-like"/>
    <property type="match status" value="1"/>
</dbReference>
<dbReference type="SUPFAM" id="SSF51735">
    <property type="entry name" value="NAD(P)-binding Rossmann-fold domains"/>
    <property type="match status" value="1"/>
</dbReference>
<dbReference type="PROSITE" id="PS00065">
    <property type="entry name" value="D_2_HYDROXYACID_DH_1"/>
    <property type="match status" value="1"/>
</dbReference>
<keyword id="KW-0025">Alternative splicing</keyword>
<keyword id="KW-0963">Cytoplasm</keyword>
<keyword id="KW-0323">Glycolate pathway</keyword>
<keyword id="KW-0520">NAD</keyword>
<keyword id="KW-0521">NADP</keyword>
<keyword id="KW-0560">Oxidoreductase</keyword>
<keyword id="KW-0601">Photorespiration</keyword>
<keyword id="KW-0670">Pyruvate</keyword>
<keyword id="KW-1185">Reference proteome</keyword>
<organism>
    <name type="scientific">Arabidopsis thaliana</name>
    <name type="common">Mouse-ear cress</name>
    <dbReference type="NCBI Taxonomy" id="3702"/>
    <lineage>
        <taxon>Eukaryota</taxon>
        <taxon>Viridiplantae</taxon>
        <taxon>Streptophyta</taxon>
        <taxon>Embryophyta</taxon>
        <taxon>Tracheophyta</taxon>
        <taxon>Spermatophyta</taxon>
        <taxon>Magnoliopsida</taxon>
        <taxon>eudicotyledons</taxon>
        <taxon>Gunneridae</taxon>
        <taxon>Pentapetalae</taxon>
        <taxon>rosids</taxon>
        <taxon>malvids</taxon>
        <taxon>Brassicales</taxon>
        <taxon>Brassicaceae</taxon>
        <taxon>Camelineae</taxon>
        <taxon>Arabidopsis</taxon>
    </lineage>
</organism>
<reference key="1">
    <citation type="journal article" date="2000" name="Nature">
        <title>Sequence and analysis of chromosome 1 of the plant Arabidopsis thaliana.</title>
        <authorList>
            <person name="Theologis A."/>
            <person name="Ecker J.R."/>
            <person name="Palm C.J."/>
            <person name="Federspiel N.A."/>
            <person name="Kaul S."/>
            <person name="White O."/>
            <person name="Alonso J."/>
            <person name="Altafi H."/>
            <person name="Araujo R."/>
            <person name="Bowman C.L."/>
            <person name="Brooks S.Y."/>
            <person name="Buehler E."/>
            <person name="Chan A."/>
            <person name="Chao Q."/>
            <person name="Chen H."/>
            <person name="Cheuk R.F."/>
            <person name="Chin C.W."/>
            <person name="Chung M.K."/>
            <person name="Conn L."/>
            <person name="Conway A.B."/>
            <person name="Conway A.R."/>
            <person name="Creasy T.H."/>
            <person name="Dewar K."/>
            <person name="Dunn P."/>
            <person name="Etgu P."/>
            <person name="Feldblyum T.V."/>
            <person name="Feng J.-D."/>
            <person name="Fong B."/>
            <person name="Fujii C.Y."/>
            <person name="Gill J.E."/>
            <person name="Goldsmith A.D."/>
            <person name="Haas B."/>
            <person name="Hansen N.F."/>
            <person name="Hughes B."/>
            <person name="Huizar L."/>
            <person name="Hunter J.L."/>
            <person name="Jenkins J."/>
            <person name="Johnson-Hopson C."/>
            <person name="Khan S."/>
            <person name="Khaykin E."/>
            <person name="Kim C.J."/>
            <person name="Koo H.L."/>
            <person name="Kremenetskaia I."/>
            <person name="Kurtz D.B."/>
            <person name="Kwan A."/>
            <person name="Lam B."/>
            <person name="Langin-Hooper S."/>
            <person name="Lee A."/>
            <person name="Lee J.M."/>
            <person name="Lenz C.A."/>
            <person name="Li J.H."/>
            <person name="Li Y.-P."/>
            <person name="Lin X."/>
            <person name="Liu S.X."/>
            <person name="Liu Z.A."/>
            <person name="Luros J.S."/>
            <person name="Maiti R."/>
            <person name="Marziali A."/>
            <person name="Militscher J."/>
            <person name="Miranda M."/>
            <person name="Nguyen M."/>
            <person name="Nierman W.C."/>
            <person name="Osborne B.I."/>
            <person name="Pai G."/>
            <person name="Peterson J."/>
            <person name="Pham P.K."/>
            <person name="Rizzo M."/>
            <person name="Rooney T."/>
            <person name="Rowley D."/>
            <person name="Sakano H."/>
            <person name="Salzberg S.L."/>
            <person name="Schwartz J.R."/>
            <person name="Shinn P."/>
            <person name="Southwick A.M."/>
            <person name="Sun H."/>
            <person name="Tallon L.J."/>
            <person name="Tambunga G."/>
            <person name="Toriumi M.J."/>
            <person name="Town C.D."/>
            <person name="Utterback T."/>
            <person name="Van Aken S."/>
            <person name="Vaysberg M."/>
            <person name="Vysotskaia V.S."/>
            <person name="Walker M."/>
            <person name="Wu D."/>
            <person name="Yu G."/>
            <person name="Fraser C.M."/>
            <person name="Venter J.C."/>
            <person name="Davis R.W."/>
        </authorList>
    </citation>
    <scope>NUCLEOTIDE SEQUENCE [LARGE SCALE GENOMIC DNA]</scope>
    <source>
        <strain>cv. Columbia</strain>
    </source>
</reference>
<reference key="2">
    <citation type="journal article" date="2017" name="Plant J.">
        <title>Araport11: a complete reannotation of the Arabidopsis thaliana reference genome.</title>
        <authorList>
            <person name="Cheng C.Y."/>
            <person name="Krishnakumar V."/>
            <person name="Chan A.P."/>
            <person name="Thibaud-Nissen F."/>
            <person name="Schobel S."/>
            <person name="Town C.D."/>
        </authorList>
    </citation>
    <scope>GENOME REANNOTATION</scope>
    <source>
        <strain>cv. Columbia</strain>
    </source>
</reference>
<reference key="3">
    <citation type="journal article" date="2003" name="Science">
        <title>Empirical analysis of transcriptional activity in the Arabidopsis genome.</title>
        <authorList>
            <person name="Yamada K."/>
            <person name="Lim J."/>
            <person name="Dale J.M."/>
            <person name="Chen H."/>
            <person name="Shinn P."/>
            <person name="Palm C.J."/>
            <person name="Southwick A.M."/>
            <person name="Wu H.C."/>
            <person name="Kim C.J."/>
            <person name="Nguyen M."/>
            <person name="Pham P.K."/>
            <person name="Cheuk R.F."/>
            <person name="Karlin-Newmann G."/>
            <person name="Liu S.X."/>
            <person name="Lam B."/>
            <person name="Sakano H."/>
            <person name="Wu T."/>
            <person name="Yu G."/>
            <person name="Miranda M."/>
            <person name="Quach H.L."/>
            <person name="Tripp M."/>
            <person name="Chang C.H."/>
            <person name="Lee J.M."/>
            <person name="Toriumi M.J."/>
            <person name="Chan M.M."/>
            <person name="Tang C.C."/>
            <person name="Onodera C.S."/>
            <person name="Deng J.M."/>
            <person name="Akiyama K."/>
            <person name="Ansari Y."/>
            <person name="Arakawa T."/>
            <person name="Banh J."/>
            <person name="Banno F."/>
            <person name="Bowser L."/>
            <person name="Brooks S.Y."/>
            <person name="Carninci P."/>
            <person name="Chao Q."/>
            <person name="Choy N."/>
            <person name="Enju A."/>
            <person name="Goldsmith A.D."/>
            <person name="Gurjal M."/>
            <person name="Hansen N.F."/>
            <person name="Hayashizaki Y."/>
            <person name="Johnson-Hopson C."/>
            <person name="Hsuan V.W."/>
            <person name="Iida K."/>
            <person name="Karnes M."/>
            <person name="Khan S."/>
            <person name="Koesema E."/>
            <person name="Ishida J."/>
            <person name="Jiang P.X."/>
            <person name="Jones T."/>
            <person name="Kawai J."/>
            <person name="Kamiya A."/>
            <person name="Meyers C."/>
            <person name="Nakajima M."/>
            <person name="Narusaka M."/>
            <person name="Seki M."/>
            <person name="Sakurai T."/>
            <person name="Satou M."/>
            <person name="Tamse R."/>
            <person name="Vaysberg M."/>
            <person name="Wallender E.K."/>
            <person name="Wong C."/>
            <person name="Yamamura Y."/>
            <person name="Yuan S."/>
            <person name="Shinozaki K."/>
            <person name="Davis R.W."/>
            <person name="Theologis A."/>
            <person name="Ecker J.R."/>
        </authorList>
    </citation>
    <scope>NUCLEOTIDE SEQUENCE [LARGE SCALE MRNA] (ISOFORM 1)</scope>
    <source>
        <strain>cv. Columbia</strain>
    </source>
</reference>
<reference key="4">
    <citation type="submission" date="2002-03" db="EMBL/GenBank/DDBJ databases">
        <title>Full-length cDNA from Arabidopsis thaliana.</title>
        <authorList>
            <person name="Brover V.V."/>
            <person name="Troukhan M.E."/>
            <person name="Alexandrov N.A."/>
            <person name="Lu Y.-P."/>
            <person name="Flavell R.B."/>
            <person name="Feldmann K.A."/>
        </authorList>
    </citation>
    <scope>NUCLEOTIDE SEQUENCE [LARGE SCALE MRNA] (ISOFORM 1)</scope>
</reference>
<reference key="5">
    <citation type="journal article" date="2008" name="Plant Cell">
        <title>A cytosolic pathway for the conversion of hydroxypyruvate to glycerate during photorespiration in Arabidopsis.</title>
        <authorList>
            <person name="Timm S."/>
            <person name="Nunes-Nesi A."/>
            <person name="Paernik T."/>
            <person name="Morgenthal K."/>
            <person name="Wienkoop S."/>
            <person name="Keerberg O."/>
            <person name="Weckwerth W."/>
            <person name="Kleczkowski L.A."/>
            <person name="Fernie A.R."/>
            <person name="Bauwe H."/>
        </authorList>
    </citation>
    <scope>FUNCTION</scope>
    <scope>DISRUPTION PHENOTYPE</scope>
    <scope>IDENTIFICATION BY MASS SPECTROMETRY</scope>
    <scope>CATALYTIC ACTIVITY</scope>
    <scope>SUBCELLULAR LOCATION</scope>
    <scope>ACTIVITY REGULATION</scope>
</reference>
<reference key="6">
    <citation type="journal article" date="2011" name="Plant Physiol.">
        <title>The hydroxypyruvate-reducing system in Arabidopsis: multiple enzymes for the same end.</title>
        <authorList>
            <person name="Timm S."/>
            <person name="Florian A."/>
            <person name="Jahnke K."/>
            <person name="Nunes-Nesi A."/>
            <person name="Fernie A.R."/>
            <person name="Bauwe H."/>
        </authorList>
    </citation>
    <scope>FUNCTION</scope>
    <source>
        <strain>cv. Columbia</strain>
        <strain>cv. Landsberg erecta</strain>
    </source>
</reference>
<evidence type="ECO:0000250" key="1"/>
<evidence type="ECO:0000269" key="2">
    <source>
    </source>
</evidence>
<evidence type="ECO:0000269" key="3">
    <source>
    </source>
</evidence>
<evidence type="ECO:0000305" key="4"/>
<gene>
    <name type="primary">HPR2</name>
    <name type="ordered locus">At1g79870</name>
    <name type="ORF">F19K16.17</name>
</gene>
<proteinExistence type="evidence at protein level"/>
<feature type="chain" id="PRO_0000419952" description="Glyoxylate/hydroxypyruvate reductase A HPR2">
    <location>
        <begin position="1"/>
        <end position="313"/>
    </location>
</feature>
<feature type="active site" evidence="1">
    <location>
        <position position="232"/>
    </location>
</feature>
<feature type="active site" evidence="1">
    <location>
        <position position="261"/>
    </location>
</feature>
<feature type="active site" description="Proton donor" evidence="1">
    <location>
        <position position="279"/>
    </location>
</feature>
<feature type="binding site" evidence="1">
    <location>
        <begin position="152"/>
        <end position="155"/>
    </location>
    <ligand>
        <name>NADP(+)</name>
        <dbReference type="ChEBI" id="CHEBI:58349"/>
    </ligand>
</feature>
<feature type="binding site" evidence="1">
    <location>
        <begin position="174"/>
        <end position="176"/>
    </location>
    <ligand>
        <name>NADP(+)</name>
        <dbReference type="ChEBI" id="CHEBI:58349"/>
    </ligand>
</feature>
<feature type="binding site" evidence="1">
    <location>
        <begin position="230"/>
        <end position="232"/>
    </location>
    <ligand>
        <name>NADP(+)</name>
        <dbReference type="ChEBI" id="CHEBI:58349"/>
    </ligand>
</feature>
<feature type="binding site" evidence="1">
    <location>
        <position position="256"/>
    </location>
    <ligand>
        <name>NADP(+)</name>
        <dbReference type="ChEBI" id="CHEBI:58349"/>
    </ligand>
</feature>
<feature type="binding site" evidence="1">
    <location>
        <begin position="279"/>
        <end position="281"/>
    </location>
    <ligand>
        <name>NADP(+)</name>
        <dbReference type="ChEBI" id="CHEBI:58349"/>
    </ligand>
</feature>
<feature type="splice variant" id="VSP_044377" description="In isoform 2." evidence="4">
    <location>
        <begin position="134"/>
        <end position="152"/>
    </location>
</feature>
<sequence length="313" mass="34161">MESIGVLMMCPMSSYLENELEKRFNLLRFWTSPEKSVLLETHRNSIRAVVGNASAGADAQLISDLPNLEIVSSFSVGLDKIDLGKCKEKGIRVTNTPDVLTEDVADLAIGLILALLRRLCECDRYVRSGKWKQGEFQLTTKFSGKSVGIIGLGRIGTAIAKRAEAFSCPINYYSRTIKPDVAYKYYPTVVDLAQNSDILVVACPLTEQTRHIVDRQVMDALGAKGVLINIGRGPHVDEQELIKALTEGRLGGAALDVFEQEPHVPEELFGLENVVLLPHVGSGTVETRNAMADLVVGNLEAHFSGKSLLTPVV</sequence>
<accession>Q9CA90</accession>
<accession>F4HQC5</accession>
<protein>
    <recommendedName>
        <fullName>Glyoxylate/hydroxypyruvate reductase A HPR2</fullName>
        <ecNumber>1.1.1.79</ecNumber>
        <ecNumber>1.1.1.81</ecNumber>
    </recommendedName>
    <alternativeName>
        <fullName>NAD(P)H-dependent hydroxypyruvate reductase 2</fullName>
        <shortName>AtHPR2</shortName>
        <shortName>HPR 2</shortName>
    </alternativeName>
</protein>
<comment type="function">
    <text evidence="2 3">Catalyzes the NADPH-dependent reduction of glyoxylate and hydroxypyruvate (HP) into glycolate and glycerate in the cytoplasm, thus providing a cytosolic bypass to the photorespiratory core cycle. Mostly active in the presence of NADPH and hydroxypyruvate.</text>
</comment>
<comment type="catalytic activity">
    <reaction evidence="2">
        <text>glycolate + NADP(+) = glyoxylate + NADPH + H(+)</text>
        <dbReference type="Rhea" id="RHEA:10992"/>
        <dbReference type="ChEBI" id="CHEBI:15378"/>
        <dbReference type="ChEBI" id="CHEBI:29805"/>
        <dbReference type="ChEBI" id="CHEBI:36655"/>
        <dbReference type="ChEBI" id="CHEBI:57783"/>
        <dbReference type="ChEBI" id="CHEBI:58349"/>
        <dbReference type="EC" id="1.1.1.79"/>
    </reaction>
</comment>
<comment type="catalytic activity">
    <reaction evidence="2">
        <text>(R)-glycerate + NAD(+) = 3-hydroxypyruvate + NADH + H(+)</text>
        <dbReference type="Rhea" id="RHEA:17905"/>
        <dbReference type="ChEBI" id="CHEBI:15378"/>
        <dbReference type="ChEBI" id="CHEBI:16659"/>
        <dbReference type="ChEBI" id="CHEBI:17180"/>
        <dbReference type="ChEBI" id="CHEBI:57540"/>
        <dbReference type="ChEBI" id="CHEBI:57945"/>
        <dbReference type="EC" id="1.1.1.81"/>
    </reaction>
</comment>
<comment type="catalytic activity">
    <reaction evidence="2">
        <text>(R)-glycerate + NADP(+) = 3-hydroxypyruvate + NADPH + H(+)</text>
        <dbReference type="Rhea" id="RHEA:18657"/>
        <dbReference type="ChEBI" id="CHEBI:15378"/>
        <dbReference type="ChEBI" id="CHEBI:16659"/>
        <dbReference type="ChEBI" id="CHEBI:17180"/>
        <dbReference type="ChEBI" id="CHEBI:57783"/>
        <dbReference type="ChEBI" id="CHEBI:58349"/>
        <dbReference type="EC" id="1.1.1.81"/>
    </reaction>
</comment>
<comment type="activity regulation">
    <text evidence="2">Strongly inhibited by oxalate.</text>
</comment>
<comment type="subunit">
    <text evidence="1">Homodimer.</text>
</comment>
<comment type="subcellular location">
    <subcellularLocation>
        <location evidence="2">Cytoplasm</location>
    </subcellularLocation>
</comment>
<comment type="alternative products">
    <event type="alternative splicing"/>
    <isoform>
        <id>Q9CA90-1</id>
        <name>1</name>
        <sequence type="displayed"/>
    </isoform>
    <isoform>
        <id>Q9CA90-2</id>
        <name>2</name>
        <sequence type="described" ref="VSP_044377"/>
    </isoform>
</comment>
<comment type="disruption phenotype">
    <text evidence="2">Elevated levels of hydroxypyruvate and other metabolites in leaves. Under long-day conditions, slightly altered photosynthetic gas exchange. When associated with HPR1 disruption, strong air-sensitivity and dramatic reduction in photosynthetic performance.</text>
</comment>
<comment type="similarity">
    <text evidence="4">Belongs to the D-isomer specific 2-hydroxyacid dehydrogenase family. GyaR subfamily.</text>
</comment>